<gene>
    <name evidence="1" type="primary">gyrB</name>
    <name type="ordered locus">HVO_1572</name>
</gene>
<feature type="chain" id="PRO_0000397104" description="DNA gyrase subunit B">
    <location>
        <begin position="1"/>
        <end position="639"/>
    </location>
</feature>
<feature type="domain" description="Toprim" evidence="1">
    <location>
        <begin position="423"/>
        <end position="537"/>
    </location>
</feature>
<feature type="region of interest" description="Disordered" evidence="2">
    <location>
        <begin position="392"/>
        <end position="416"/>
    </location>
</feature>
<feature type="compositionally biased region" description="Basic and acidic residues" evidence="2">
    <location>
        <begin position="392"/>
        <end position="402"/>
    </location>
</feature>
<feature type="binding site" evidence="1">
    <location>
        <position position="429"/>
    </location>
    <ligand>
        <name>Mg(2+)</name>
        <dbReference type="ChEBI" id="CHEBI:18420"/>
        <label>1</label>
        <note>catalytic</note>
    </ligand>
</feature>
<feature type="binding site" evidence="1">
    <location>
        <position position="502"/>
    </location>
    <ligand>
        <name>Mg(2+)</name>
        <dbReference type="ChEBI" id="CHEBI:18420"/>
        <label>1</label>
        <note>catalytic</note>
    </ligand>
</feature>
<feature type="binding site" evidence="1">
    <location>
        <position position="502"/>
    </location>
    <ligand>
        <name>Mg(2+)</name>
        <dbReference type="ChEBI" id="CHEBI:18420"/>
        <label>2</label>
    </ligand>
</feature>
<feature type="binding site" evidence="1">
    <location>
        <position position="504"/>
    </location>
    <ligand>
        <name>Mg(2+)</name>
        <dbReference type="ChEBI" id="CHEBI:18420"/>
        <label>2</label>
    </ligand>
</feature>
<feature type="site" description="Interaction with DNA" evidence="1">
    <location>
        <position position="454"/>
    </location>
</feature>
<feature type="site" description="Interaction with DNA" evidence="1">
    <location>
        <position position="457"/>
    </location>
</feature>
<feature type="cross-link" description="Glycyl lysine isopeptide (Lys-Gly) (interchain with G-Cter in SAMP2)" evidence="3">
    <location>
        <position position="624"/>
    </location>
</feature>
<reference key="1">
    <citation type="journal article" date="2010" name="PLoS ONE">
        <title>The complete genome sequence of Haloferax volcanii DS2, a model archaeon.</title>
        <authorList>
            <person name="Hartman A.L."/>
            <person name="Norais C."/>
            <person name="Badger J.H."/>
            <person name="Delmas S."/>
            <person name="Haldenby S."/>
            <person name="Madupu R."/>
            <person name="Robinson J."/>
            <person name="Khouri H."/>
            <person name="Ren Q."/>
            <person name="Lowe T.M."/>
            <person name="Maupin-Furlow J."/>
            <person name="Pohlschroder M."/>
            <person name="Daniels C."/>
            <person name="Pfeiffer F."/>
            <person name="Allers T."/>
            <person name="Eisen J.A."/>
        </authorList>
    </citation>
    <scope>NUCLEOTIDE SEQUENCE [LARGE SCALE GENOMIC DNA]</scope>
    <source>
        <strain>ATCC 29605 / DSM 3757 / JCM 8879 / NBRC 14742 / NCIMB 2012 / VKM B-1768 / DS2</strain>
    </source>
</reference>
<reference key="2">
    <citation type="journal article" date="2010" name="Nature">
        <title>Ubiquitin-like small archaeal modifier proteins (SAMPs) in Haloferax volcanii.</title>
        <authorList>
            <person name="Humbard M.A."/>
            <person name="Miranda H.V."/>
            <person name="Lim J.M."/>
            <person name="Krause D.J."/>
            <person name="Pritz J.R."/>
            <person name="Zhou G."/>
            <person name="Chen S."/>
            <person name="Wells L."/>
            <person name="Maupin-Furlow J.A."/>
        </authorList>
    </citation>
    <scope>SAMPYLATION AT LYS-624</scope>
    <scope>IDENTIFICATION BY MASS SPECTROMETRY</scope>
</reference>
<name>GYRB_HALVD</name>
<proteinExistence type="evidence at protein level"/>
<sequence>MSQDNEYGAGQIQVLEGLEAVRKRPAMYIGSTDSRGLHHLVYEVVDNSIDEALAGHCDAIEVALHEDGSVSVTDNGRGIPVDTHEQYDRPALEVIMTVLHAGGKFDNKSYQVSGGLHGVGVSVVNALSSELEVEVKRDGAVWTHRFEVGEPQVEEFERVRDLEPGEDTGTTIRFWPDDGIFETTEFDFKTLENRLRELAFLNSGVEISLSDERTDESSTFLFEGGIREFVEYLNETKTALHDDVIYYDDESEGIEVEIAMQATDELQGSIHAFANNINTREGGTHLTGFKTALTRVVNDYANTHDMLDDLDGDNLRGEDVREGLTAVISIKHPDPQFEGQTKTKLGNSEVRGIVESVTHQQLGTFFEENPDTATAIISKAVEAARARKAAKQAEELTRRKSALESTSLPGKLADCQSRDPAESELFIVEGDSAGGSAKQGRDRKFQAILPLKGKILNVEKHRLDRILENDEIRALITAIGGGVGDEFDIEKARYQRLILMTDADVDGAHIRTLLLTLLYRHMRPLIEAGYVYAAQPPLYRVRYRGNTYDAMDEAERDRIIEEECNGNPTQVQRFKGLGEMNPDQLWDTTMNPENRVLKRITVEDAAAADRMFNILMGDAVGPRKQFIKDHANDAEWVDI</sequence>
<accession>D4GZ01</accession>
<comment type="function">
    <text evidence="1">A type II topoisomerase that negatively supercoils closed circular double-stranded (ds) DNA in an ATP-dependent manner to modulate DNA topology and maintain chromosomes in an underwound state. Negative supercoiling favors strand separation, and DNA replication, transcription, recombination and repair, all of which involve strand separation. Also able to catalyze the interconversion of other topological isomers of dsDNA rings, including catenanes and knotted rings. Type II topoisomerases break and join 2 DNA strands simultaneously in an ATP-dependent manner.</text>
</comment>
<comment type="catalytic activity">
    <reaction evidence="1">
        <text>ATP-dependent breakage, passage and rejoining of double-stranded DNA.</text>
        <dbReference type="EC" id="5.6.2.2"/>
    </reaction>
</comment>
<comment type="cofactor">
    <cofactor evidence="1">
        <name>Mg(2+)</name>
        <dbReference type="ChEBI" id="CHEBI:18420"/>
    </cofactor>
    <cofactor evidence="1">
        <name>Mn(2+)</name>
        <dbReference type="ChEBI" id="CHEBI:29035"/>
    </cofactor>
    <cofactor evidence="1">
        <name>Ca(2+)</name>
        <dbReference type="ChEBI" id="CHEBI:29108"/>
    </cofactor>
    <text evidence="1">Binds two Mg(2+) per subunit. The magnesium ions form salt bridges with both the protein and the DNA. Can also accept other divalent metal cations, such as Mn(2+) or Ca(2+).</text>
</comment>
<comment type="subunit">
    <text evidence="1">Heterotetramer, composed of two GyrA and two GyrB chains. In the heterotetramer, GyrA contains the active site tyrosine that forms a transient covalent intermediate with DNA, while GyrB binds cofactors and catalyzes ATP hydrolysis.</text>
</comment>
<comment type="subcellular location">
    <subcellularLocation>
        <location evidence="1">Cytoplasm</location>
    </subcellularLocation>
</comment>
<comment type="miscellaneous">
    <text evidence="1">Few gyrases are as efficient as E.coli at forming negative supercoils. Not all organisms have 2 type II topoisomerases; in organisms with a single type II topoisomerase this enzyme also has to decatenate newly replicated chromosomes.</text>
</comment>
<comment type="similarity">
    <text evidence="1">Belongs to the type II topoisomerase GyrB family.</text>
</comment>
<evidence type="ECO:0000255" key="1">
    <source>
        <dbReference type="HAMAP-Rule" id="MF_01898"/>
    </source>
</evidence>
<evidence type="ECO:0000256" key="2">
    <source>
        <dbReference type="SAM" id="MobiDB-lite"/>
    </source>
</evidence>
<evidence type="ECO:0000269" key="3">
    <source>
    </source>
</evidence>
<dbReference type="EC" id="5.6.2.2" evidence="1"/>
<dbReference type="EMBL" id="CP001956">
    <property type="protein sequence ID" value="ADE04852.1"/>
    <property type="molecule type" value="Genomic_DNA"/>
</dbReference>
<dbReference type="RefSeq" id="WP_004041451.1">
    <property type="nucleotide sequence ID" value="NC_013967.1"/>
</dbReference>
<dbReference type="SMR" id="D4GZ01"/>
<dbReference type="STRING" id="309800.HVO_1572"/>
<dbReference type="PaxDb" id="309800-C498_03220"/>
<dbReference type="EnsemblBacteria" id="ADE04852">
    <property type="protein sequence ID" value="ADE04852"/>
    <property type="gene ID" value="HVO_1572"/>
</dbReference>
<dbReference type="GeneID" id="8925840"/>
<dbReference type="KEGG" id="hvo:HVO_1572"/>
<dbReference type="eggNOG" id="arCOG04371">
    <property type="taxonomic scope" value="Archaea"/>
</dbReference>
<dbReference type="HOGENOM" id="CLU_006146_4_1_2"/>
<dbReference type="OrthoDB" id="358756at2157"/>
<dbReference type="Proteomes" id="UP000008243">
    <property type="component" value="Chromosome"/>
</dbReference>
<dbReference type="GO" id="GO:0005694">
    <property type="term" value="C:chromosome"/>
    <property type="evidence" value="ECO:0007669"/>
    <property type="project" value="InterPro"/>
</dbReference>
<dbReference type="GO" id="GO:0005737">
    <property type="term" value="C:cytoplasm"/>
    <property type="evidence" value="ECO:0007669"/>
    <property type="project" value="UniProtKB-SubCell"/>
</dbReference>
<dbReference type="GO" id="GO:0005524">
    <property type="term" value="F:ATP binding"/>
    <property type="evidence" value="ECO:0007669"/>
    <property type="project" value="UniProtKB-UniRule"/>
</dbReference>
<dbReference type="GO" id="GO:0003677">
    <property type="term" value="F:DNA binding"/>
    <property type="evidence" value="ECO:0007669"/>
    <property type="project" value="UniProtKB-KW"/>
</dbReference>
<dbReference type="GO" id="GO:0003918">
    <property type="term" value="F:DNA topoisomerase type II (double strand cut, ATP-hydrolyzing) activity"/>
    <property type="evidence" value="ECO:0007669"/>
    <property type="project" value="UniProtKB-UniRule"/>
</dbReference>
<dbReference type="GO" id="GO:0046872">
    <property type="term" value="F:metal ion binding"/>
    <property type="evidence" value="ECO:0007669"/>
    <property type="project" value="UniProtKB-KW"/>
</dbReference>
<dbReference type="GO" id="GO:0006265">
    <property type="term" value="P:DNA topological change"/>
    <property type="evidence" value="ECO:0007669"/>
    <property type="project" value="UniProtKB-UniRule"/>
</dbReference>
<dbReference type="GO" id="GO:0006261">
    <property type="term" value="P:DNA-templated DNA replication"/>
    <property type="evidence" value="ECO:0007669"/>
    <property type="project" value="UniProtKB-UniRule"/>
</dbReference>
<dbReference type="CDD" id="cd16928">
    <property type="entry name" value="HATPase_GyrB-like"/>
    <property type="match status" value="1"/>
</dbReference>
<dbReference type="CDD" id="cd00822">
    <property type="entry name" value="TopoII_Trans_DNA_gyrase"/>
    <property type="match status" value="1"/>
</dbReference>
<dbReference type="CDD" id="cd03366">
    <property type="entry name" value="TOPRIM_TopoIIA_GyrB"/>
    <property type="match status" value="1"/>
</dbReference>
<dbReference type="FunFam" id="3.30.230.10:FF:000005">
    <property type="entry name" value="DNA gyrase subunit B"/>
    <property type="match status" value="1"/>
</dbReference>
<dbReference type="FunFam" id="3.30.565.10:FF:000002">
    <property type="entry name" value="DNA gyrase subunit B"/>
    <property type="match status" value="1"/>
</dbReference>
<dbReference type="FunFam" id="3.40.50.670:FF:000002">
    <property type="entry name" value="DNA gyrase subunit B"/>
    <property type="match status" value="1"/>
</dbReference>
<dbReference type="Gene3D" id="3.30.230.10">
    <property type="match status" value="1"/>
</dbReference>
<dbReference type="Gene3D" id="3.40.50.670">
    <property type="match status" value="1"/>
</dbReference>
<dbReference type="Gene3D" id="3.30.565.10">
    <property type="entry name" value="Histidine kinase-like ATPase, C-terminal domain"/>
    <property type="match status" value="1"/>
</dbReference>
<dbReference type="HAMAP" id="MF_01898">
    <property type="entry name" value="GyrB"/>
    <property type="match status" value="1"/>
</dbReference>
<dbReference type="InterPro" id="IPR002288">
    <property type="entry name" value="DNA_gyrase_B_C"/>
</dbReference>
<dbReference type="InterPro" id="IPR011557">
    <property type="entry name" value="GyrB"/>
</dbReference>
<dbReference type="InterPro" id="IPR036890">
    <property type="entry name" value="HATPase_C_sf"/>
</dbReference>
<dbReference type="InterPro" id="IPR020568">
    <property type="entry name" value="Ribosomal_Su5_D2-typ_SF"/>
</dbReference>
<dbReference type="InterPro" id="IPR014721">
    <property type="entry name" value="Ribsml_uS5_D2-typ_fold_subgr"/>
</dbReference>
<dbReference type="InterPro" id="IPR001241">
    <property type="entry name" value="Topo_IIA"/>
</dbReference>
<dbReference type="InterPro" id="IPR013760">
    <property type="entry name" value="Topo_IIA-like_dom_sf"/>
</dbReference>
<dbReference type="InterPro" id="IPR000565">
    <property type="entry name" value="Topo_IIA_B"/>
</dbReference>
<dbReference type="InterPro" id="IPR013759">
    <property type="entry name" value="Topo_IIA_B_C"/>
</dbReference>
<dbReference type="InterPro" id="IPR013506">
    <property type="entry name" value="Topo_IIA_bsu_dom2"/>
</dbReference>
<dbReference type="InterPro" id="IPR018522">
    <property type="entry name" value="TopoIIA_CS"/>
</dbReference>
<dbReference type="InterPro" id="IPR006171">
    <property type="entry name" value="TOPRIM_dom"/>
</dbReference>
<dbReference type="InterPro" id="IPR034160">
    <property type="entry name" value="TOPRIM_GyrB"/>
</dbReference>
<dbReference type="NCBIfam" id="TIGR01059">
    <property type="entry name" value="gyrB"/>
    <property type="match status" value="1"/>
</dbReference>
<dbReference type="NCBIfam" id="NF004189">
    <property type="entry name" value="PRK05644.1"/>
    <property type="match status" value="1"/>
</dbReference>
<dbReference type="NCBIfam" id="NF011501">
    <property type="entry name" value="PRK14939.1"/>
    <property type="match status" value="1"/>
</dbReference>
<dbReference type="PANTHER" id="PTHR45866:SF1">
    <property type="entry name" value="DNA GYRASE SUBUNIT B, MITOCHONDRIAL"/>
    <property type="match status" value="1"/>
</dbReference>
<dbReference type="PANTHER" id="PTHR45866">
    <property type="entry name" value="DNA GYRASE/TOPOISOMERASE SUBUNIT B"/>
    <property type="match status" value="1"/>
</dbReference>
<dbReference type="Pfam" id="PF00204">
    <property type="entry name" value="DNA_gyraseB"/>
    <property type="match status" value="1"/>
</dbReference>
<dbReference type="Pfam" id="PF00986">
    <property type="entry name" value="DNA_gyraseB_C"/>
    <property type="match status" value="1"/>
</dbReference>
<dbReference type="Pfam" id="PF02518">
    <property type="entry name" value="HATPase_c"/>
    <property type="match status" value="1"/>
</dbReference>
<dbReference type="Pfam" id="PF01751">
    <property type="entry name" value="Toprim"/>
    <property type="match status" value="1"/>
</dbReference>
<dbReference type="PRINTS" id="PR01159">
    <property type="entry name" value="DNAGYRASEB"/>
</dbReference>
<dbReference type="PRINTS" id="PR00418">
    <property type="entry name" value="TPI2FAMILY"/>
</dbReference>
<dbReference type="SMART" id="SM00387">
    <property type="entry name" value="HATPase_c"/>
    <property type="match status" value="1"/>
</dbReference>
<dbReference type="SMART" id="SM00433">
    <property type="entry name" value="TOP2c"/>
    <property type="match status" value="1"/>
</dbReference>
<dbReference type="SUPFAM" id="SSF55874">
    <property type="entry name" value="ATPase domain of HSP90 chaperone/DNA topoisomerase II/histidine kinase"/>
    <property type="match status" value="1"/>
</dbReference>
<dbReference type="SUPFAM" id="SSF54211">
    <property type="entry name" value="Ribosomal protein S5 domain 2-like"/>
    <property type="match status" value="1"/>
</dbReference>
<dbReference type="SUPFAM" id="SSF56719">
    <property type="entry name" value="Type II DNA topoisomerase"/>
    <property type="match status" value="1"/>
</dbReference>
<dbReference type="PROSITE" id="PS00177">
    <property type="entry name" value="TOPOISOMERASE_II"/>
    <property type="match status" value="1"/>
</dbReference>
<dbReference type="PROSITE" id="PS50880">
    <property type="entry name" value="TOPRIM"/>
    <property type="match status" value="1"/>
</dbReference>
<organism>
    <name type="scientific">Haloferax volcanii (strain ATCC 29605 / DSM 3757 / JCM 8879 / NBRC 14742 / NCIMB 2012 / VKM B-1768 / DS2)</name>
    <name type="common">Halobacterium volcanii</name>
    <dbReference type="NCBI Taxonomy" id="309800"/>
    <lineage>
        <taxon>Archaea</taxon>
        <taxon>Methanobacteriati</taxon>
        <taxon>Methanobacteriota</taxon>
        <taxon>Stenosarchaea group</taxon>
        <taxon>Halobacteria</taxon>
        <taxon>Halobacteriales</taxon>
        <taxon>Haloferacaceae</taxon>
        <taxon>Haloferax</taxon>
    </lineage>
</organism>
<protein>
    <recommendedName>
        <fullName evidence="1">DNA gyrase subunit B</fullName>
        <ecNumber evidence="1">5.6.2.2</ecNumber>
    </recommendedName>
</protein>
<keyword id="KW-0067">ATP-binding</keyword>
<keyword id="KW-0963">Cytoplasm</keyword>
<keyword id="KW-0238">DNA-binding</keyword>
<keyword id="KW-0413">Isomerase</keyword>
<keyword id="KW-1017">Isopeptide bond</keyword>
<keyword id="KW-0460">Magnesium</keyword>
<keyword id="KW-0479">Metal-binding</keyword>
<keyword id="KW-0547">Nucleotide-binding</keyword>
<keyword id="KW-1185">Reference proteome</keyword>
<keyword id="KW-0799">Topoisomerase</keyword>
<keyword id="KW-0832">Ubl conjugation</keyword>